<reference key="1">
    <citation type="journal article" date="2001" name="J. Biol. Chem.">
        <title>Identification of the carbohydrate moieties and glycosylation motifs in Campylobacter jejuni flagellin.</title>
        <authorList>
            <person name="Thibault P."/>
            <person name="Logan S.M."/>
            <person name="Kelly J.F."/>
            <person name="Brisson J.-R."/>
            <person name="Ewing C.P."/>
            <person name="Trust T.J."/>
            <person name="Guerry P."/>
        </authorList>
    </citation>
    <scope>NUCLEOTIDE SEQUENCE [GENOMIC DNA]</scope>
    <source>
        <strain>81-176</strain>
    </source>
</reference>
<reference key="2">
    <citation type="journal article" date="2006" name="Infect. Immun.">
        <title>Unique features of a highly pathogenic Campylobacter jejuni strain.</title>
        <authorList>
            <person name="Hofreuter D."/>
            <person name="Tsai J."/>
            <person name="Watson R.O."/>
            <person name="Novik V."/>
            <person name="Altman B."/>
            <person name="Benitez M."/>
            <person name="Clark C."/>
            <person name="Perbost C."/>
            <person name="Jarvie T."/>
            <person name="Du L."/>
            <person name="Galan J.E."/>
        </authorList>
    </citation>
    <scope>NUCLEOTIDE SEQUENCE [GENOMIC DNA]</scope>
    <source>
        <strain>81-176</strain>
    </source>
</reference>
<reference key="3">
    <citation type="submission" date="2006-12" db="EMBL/GenBank/DDBJ databases">
        <authorList>
            <person name="Fouts D.E."/>
            <person name="Nelson K.E."/>
            <person name="Sebastian Y."/>
        </authorList>
    </citation>
    <scope>NUCLEOTIDE SEQUENCE [LARGE SCALE GENOMIC DNA]</scope>
    <source>
        <strain>81-176</strain>
    </source>
</reference>
<reference key="4">
    <citation type="journal article" date="2006" name="J. Biol. Chem.">
        <title>Functional characterization of the flagellar glycosylation locus in Campylobacter jejuni 81-176 using a focused metabolomics approach.</title>
        <authorList>
            <person name="McNally D.J."/>
            <person name="Hui J.P."/>
            <person name="Aubry A.J."/>
            <person name="Mui K.K."/>
            <person name="Guerry P."/>
            <person name="Brisson J.R."/>
            <person name="Logan S.M."/>
            <person name="Soo E.C."/>
        </authorList>
    </citation>
    <scope>FUNCTION</scope>
    <source>
        <strain>81-176</strain>
    </source>
</reference>
<gene>
    <name type="primary">pseC</name>
    <name type="ordered locus">CJJ81176_1311</name>
</gene>
<organism>
    <name type="scientific">Campylobacter jejuni subsp. jejuni serotype O:23/36 (strain 81-176)</name>
    <dbReference type="NCBI Taxonomy" id="354242"/>
    <lineage>
        <taxon>Bacteria</taxon>
        <taxon>Pseudomonadati</taxon>
        <taxon>Campylobacterota</taxon>
        <taxon>Epsilonproteobacteria</taxon>
        <taxon>Campylobacterales</taxon>
        <taxon>Campylobacteraceae</taxon>
        <taxon>Campylobacter</taxon>
    </lineage>
</organism>
<proteinExistence type="inferred from homology"/>
<comment type="function">
    <text evidence="3">Catalyzes the second step in the biosynthesis of pseudaminic acid, a sialic-acid-like sugar that is used to modify flagellin. Uses UDP-2-acetamido-2,6-dideoxy-beta-L-arabino-4-hexulose as substrate producing UDP-4-amino-4,6-dideoxy-beta-L-AltNAc.</text>
</comment>
<comment type="catalytic activity">
    <reaction evidence="2">
        <text>UDP-4-amino-4,6-dideoxy-N-acetyl-beta-L-altrosamine + 2-oxoglutarate = UDP-2-acetamido-2,6-dideoxy-beta-L-arabino-hex-4-ulose + L-glutamate</text>
        <dbReference type="Rhea" id="RHEA:31767"/>
        <dbReference type="ChEBI" id="CHEBI:16810"/>
        <dbReference type="ChEBI" id="CHEBI:29985"/>
        <dbReference type="ChEBI" id="CHEBI:60101"/>
        <dbReference type="ChEBI" id="CHEBI:63389"/>
        <dbReference type="EC" id="2.6.1.92"/>
    </reaction>
</comment>
<comment type="similarity">
    <text evidence="4">Belongs to the DegT/DnrJ/EryC1 family.</text>
</comment>
<feature type="chain" id="PRO_0000418959" description="UDP-4-amino-4,6-dideoxy-N-acetyl-beta-L-altrosamine transaminase">
    <location>
        <begin position="1"/>
        <end position="376"/>
    </location>
</feature>
<feature type="binding site" evidence="1">
    <location>
        <position position="4"/>
    </location>
    <ligand>
        <name>substrate</name>
    </ligand>
</feature>
<feature type="binding site" evidence="1">
    <location>
        <begin position="24"/>
        <end position="27"/>
    </location>
    <ligand>
        <name>substrate</name>
    </ligand>
</feature>
<feature type="binding site" evidence="1">
    <location>
        <position position="54"/>
    </location>
    <ligand>
        <name>substrate</name>
    </ligand>
</feature>
<feature type="binding site" evidence="1">
    <location>
        <position position="176"/>
    </location>
    <ligand>
        <name>substrate</name>
    </ligand>
</feature>
<feature type="binding site" evidence="1">
    <location>
        <position position="226"/>
    </location>
    <ligand>
        <name>substrate</name>
    </ligand>
</feature>
<feature type="binding site" evidence="1">
    <location>
        <begin position="311"/>
        <end position="314"/>
    </location>
    <ligand>
        <name>substrate</name>
    </ligand>
</feature>
<feature type="modified residue" description="N6-(pyridoxal phosphate)lysine" evidence="1">
    <location>
        <position position="181"/>
    </location>
</feature>
<accession>Q5QKR7</accession>
<sequence>MITYSHQNIDQSDIDALTKALKDEILTGGKKVDEFEEALCEYIGVKHACVLNSATSALHLAYTALGIKEKIVLTTPLTFAATANAALIAGAKVEFIDIKNDGNIDEKKLEARLVKNSTDIGAISVVDFGGNSVEMDEISNLAKKYNIPLIDDASHALGSEYKGKKVGSMADLSIFSFHPVKPITTFEGGAVVSNNKELISKIKLLRSHGIVKKRLWDSDMIELGYNYRLSDVACALGINQLKKLDHNLEKREEITSFYDKEFEKNHYFSTIKIKDYKKSSRHLYPILLFPEFYCQKEELFESLLHAGIGVQVHYKPTYEFSFYKKLLGEIRLQNADNFYKAELSIPCHQEMNLKDAKFVKDTLFSILEKVKKGYCG</sequence>
<keyword id="KW-0032">Aminotransferase</keyword>
<keyword id="KW-0663">Pyridoxal phosphate</keyword>
<keyword id="KW-0808">Transferase</keyword>
<dbReference type="EC" id="2.6.1.92" evidence="2"/>
<dbReference type="EMBL" id="AY102622">
    <property type="protein sequence ID" value="AAP12669.1"/>
    <property type="molecule type" value="Genomic_DNA"/>
</dbReference>
<dbReference type="EMBL" id="DQ493920">
    <property type="protein sequence ID" value="ABF83717.1"/>
    <property type="molecule type" value="Genomic_DNA"/>
</dbReference>
<dbReference type="EMBL" id="CP000538">
    <property type="protein sequence ID" value="EAQ72854.1"/>
    <property type="molecule type" value="Genomic_DNA"/>
</dbReference>
<dbReference type="RefSeq" id="WP_002869094.1">
    <property type="nucleotide sequence ID" value="NC_008787.1"/>
</dbReference>
<dbReference type="SMR" id="Q5QKR7"/>
<dbReference type="KEGG" id="cjj:CJJ81176_1311"/>
<dbReference type="eggNOG" id="COG0399">
    <property type="taxonomic scope" value="Bacteria"/>
</dbReference>
<dbReference type="HOGENOM" id="CLU_033332_0_3_7"/>
<dbReference type="Proteomes" id="UP000000646">
    <property type="component" value="Chromosome"/>
</dbReference>
<dbReference type="GO" id="GO:0030170">
    <property type="term" value="F:pyridoxal phosphate binding"/>
    <property type="evidence" value="ECO:0007669"/>
    <property type="project" value="TreeGrafter"/>
</dbReference>
<dbReference type="GO" id="GO:0008483">
    <property type="term" value="F:transaminase activity"/>
    <property type="evidence" value="ECO:0007669"/>
    <property type="project" value="UniProtKB-KW"/>
</dbReference>
<dbReference type="GO" id="GO:0000271">
    <property type="term" value="P:polysaccharide biosynthetic process"/>
    <property type="evidence" value="ECO:0007669"/>
    <property type="project" value="TreeGrafter"/>
</dbReference>
<dbReference type="CDD" id="cd00616">
    <property type="entry name" value="AHBA_syn"/>
    <property type="match status" value="1"/>
</dbReference>
<dbReference type="Gene3D" id="3.90.1150.10">
    <property type="entry name" value="Aspartate Aminotransferase, domain 1"/>
    <property type="match status" value="1"/>
</dbReference>
<dbReference type="Gene3D" id="3.40.640.10">
    <property type="entry name" value="Type I PLP-dependent aspartate aminotransferase-like (Major domain)"/>
    <property type="match status" value="1"/>
</dbReference>
<dbReference type="InterPro" id="IPR000653">
    <property type="entry name" value="DegT/StrS_aminotransferase"/>
</dbReference>
<dbReference type="InterPro" id="IPR020026">
    <property type="entry name" value="PseC"/>
</dbReference>
<dbReference type="InterPro" id="IPR015424">
    <property type="entry name" value="PyrdxlP-dep_Trfase"/>
</dbReference>
<dbReference type="InterPro" id="IPR015421">
    <property type="entry name" value="PyrdxlP-dep_Trfase_major"/>
</dbReference>
<dbReference type="InterPro" id="IPR015422">
    <property type="entry name" value="PyrdxlP-dep_Trfase_small"/>
</dbReference>
<dbReference type="NCBIfam" id="TIGR03588">
    <property type="entry name" value="PseC"/>
    <property type="match status" value="1"/>
</dbReference>
<dbReference type="PANTHER" id="PTHR30244:SF34">
    <property type="entry name" value="DTDP-4-AMINO-4,6-DIDEOXYGALACTOSE TRANSAMINASE"/>
    <property type="match status" value="1"/>
</dbReference>
<dbReference type="PANTHER" id="PTHR30244">
    <property type="entry name" value="TRANSAMINASE"/>
    <property type="match status" value="1"/>
</dbReference>
<dbReference type="Pfam" id="PF01041">
    <property type="entry name" value="DegT_DnrJ_EryC1"/>
    <property type="match status" value="1"/>
</dbReference>
<dbReference type="PIRSF" id="PIRSF000390">
    <property type="entry name" value="PLP_StrS"/>
    <property type="match status" value="1"/>
</dbReference>
<dbReference type="SUPFAM" id="SSF53383">
    <property type="entry name" value="PLP-dependent transferases"/>
    <property type="match status" value="1"/>
</dbReference>
<name>PSEC_CAMJJ</name>
<protein>
    <recommendedName>
        <fullName>UDP-4-amino-4,6-dideoxy-N-acetyl-beta-L-altrosamine transaminase</fullName>
        <ecNumber evidence="2">2.6.1.92</ecNumber>
    </recommendedName>
    <alternativeName>
        <fullName>Pseudaminic acid biosynthesis protein C</fullName>
    </alternativeName>
</protein>
<evidence type="ECO:0000250" key="1"/>
<evidence type="ECO:0000250" key="2">
    <source>
        <dbReference type="UniProtKB" id="Q0P8W3"/>
    </source>
</evidence>
<evidence type="ECO:0000269" key="3">
    <source>
    </source>
</evidence>
<evidence type="ECO:0000305" key="4"/>